<evidence type="ECO:0000255" key="1">
    <source>
        <dbReference type="HAMAP-Rule" id="MF_00182"/>
    </source>
</evidence>
<keyword id="KW-0648">Protein biosynthesis</keyword>
<keyword id="KW-1185">Reference proteome</keyword>
<keyword id="KW-0808">Transferase</keyword>
<name>FMT_CAMJE</name>
<accession>Q9PJ28</accession>
<accession>Q0PC39</accession>
<reference key="1">
    <citation type="journal article" date="2000" name="Nature">
        <title>The genome sequence of the food-borne pathogen Campylobacter jejuni reveals hypervariable sequences.</title>
        <authorList>
            <person name="Parkhill J."/>
            <person name="Wren B.W."/>
            <person name="Mungall K.L."/>
            <person name="Ketley J.M."/>
            <person name="Churcher C.M."/>
            <person name="Basham D."/>
            <person name="Chillingworth T."/>
            <person name="Davies R.M."/>
            <person name="Feltwell T."/>
            <person name="Holroyd S."/>
            <person name="Jagels K."/>
            <person name="Karlyshev A.V."/>
            <person name="Moule S."/>
            <person name="Pallen M.J."/>
            <person name="Penn C.W."/>
            <person name="Quail M.A."/>
            <person name="Rajandream M.A."/>
            <person name="Rutherford K.M."/>
            <person name="van Vliet A.H.M."/>
            <person name="Whitehead S."/>
            <person name="Barrell B.G."/>
        </authorList>
    </citation>
    <scope>NUCLEOTIDE SEQUENCE [LARGE SCALE GENOMIC DNA]</scope>
    <source>
        <strain>ATCC 700819 / NCTC 11168</strain>
    </source>
</reference>
<sequence length="305" mass="34069">MKKIIFMGTPSYATCILKALVENENFKLVALFTQPDKAVGRKQILTPSDTKAFLSQNYPSIPIFTPSSLKDKNIIREIKDLNPDFIVVAAYGKILPKAILDLAPCVNLHASLLPKYRGASPIQSAILNKDEKSGVCTMLMEEGLDTGAILESLECDIKDKNSSEVFELLANLAAKIILSTLLNFDKITPKKQEESLATLCRKIKKEDGLINLQNARELYQKYLAFTPWPGVFLENGLKFLELELVDELKQNAKMGEILELEKESFLLACKQGVLRIKKLQESGKKALDGRTYLNGKRLKSEDSLC</sequence>
<protein>
    <recommendedName>
        <fullName evidence="1">Methionyl-tRNA formyltransferase</fullName>
        <ecNumber evidence="1">2.1.2.9</ecNumber>
    </recommendedName>
</protein>
<gene>
    <name evidence="1" type="primary">fmt</name>
    <name type="ordered locus">Cj0098</name>
</gene>
<proteinExistence type="inferred from homology"/>
<comment type="function">
    <text evidence="1">Attaches a formyl group to the free amino group of methionyl-tRNA(fMet). The formyl group appears to play a dual role in the initiator identity of N-formylmethionyl-tRNA by promoting its recognition by IF2 and preventing the misappropriation of this tRNA by the elongation apparatus.</text>
</comment>
<comment type="catalytic activity">
    <reaction evidence="1">
        <text>L-methionyl-tRNA(fMet) + (6R)-10-formyltetrahydrofolate = N-formyl-L-methionyl-tRNA(fMet) + (6S)-5,6,7,8-tetrahydrofolate + H(+)</text>
        <dbReference type="Rhea" id="RHEA:24380"/>
        <dbReference type="Rhea" id="RHEA-COMP:9952"/>
        <dbReference type="Rhea" id="RHEA-COMP:9953"/>
        <dbReference type="ChEBI" id="CHEBI:15378"/>
        <dbReference type="ChEBI" id="CHEBI:57453"/>
        <dbReference type="ChEBI" id="CHEBI:78530"/>
        <dbReference type="ChEBI" id="CHEBI:78844"/>
        <dbReference type="ChEBI" id="CHEBI:195366"/>
        <dbReference type="EC" id="2.1.2.9"/>
    </reaction>
</comment>
<comment type="similarity">
    <text evidence="1">Belongs to the Fmt family.</text>
</comment>
<dbReference type="EC" id="2.1.2.9" evidence="1"/>
<dbReference type="EMBL" id="AL111168">
    <property type="protein sequence ID" value="CAL34269.1"/>
    <property type="molecule type" value="Genomic_DNA"/>
</dbReference>
<dbReference type="PIR" id="B81426">
    <property type="entry name" value="B81426"/>
</dbReference>
<dbReference type="RefSeq" id="WP_002851657.1">
    <property type="nucleotide sequence ID" value="NZ_SZUC01000005.1"/>
</dbReference>
<dbReference type="RefSeq" id="YP_002343558.1">
    <property type="nucleotide sequence ID" value="NC_002163.1"/>
</dbReference>
<dbReference type="SMR" id="Q9PJ28"/>
<dbReference type="STRING" id="192222.Cj0098"/>
<dbReference type="PaxDb" id="192222-Cj0098"/>
<dbReference type="EnsemblBacteria" id="CAL34269">
    <property type="protein sequence ID" value="CAL34269"/>
    <property type="gene ID" value="Cj0098"/>
</dbReference>
<dbReference type="GeneID" id="904427"/>
<dbReference type="KEGG" id="cje:Cj0098"/>
<dbReference type="PATRIC" id="fig|192222.6.peg.96"/>
<dbReference type="eggNOG" id="COG0223">
    <property type="taxonomic scope" value="Bacteria"/>
</dbReference>
<dbReference type="HOGENOM" id="CLU_033347_1_1_7"/>
<dbReference type="OrthoDB" id="9802815at2"/>
<dbReference type="Proteomes" id="UP000000799">
    <property type="component" value="Chromosome"/>
</dbReference>
<dbReference type="GO" id="GO:0005829">
    <property type="term" value="C:cytosol"/>
    <property type="evidence" value="ECO:0007669"/>
    <property type="project" value="TreeGrafter"/>
</dbReference>
<dbReference type="GO" id="GO:0004479">
    <property type="term" value="F:methionyl-tRNA formyltransferase activity"/>
    <property type="evidence" value="ECO:0007669"/>
    <property type="project" value="UniProtKB-UniRule"/>
</dbReference>
<dbReference type="CDD" id="cd08646">
    <property type="entry name" value="FMT_core_Met-tRNA-FMT_N"/>
    <property type="match status" value="1"/>
</dbReference>
<dbReference type="CDD" id="cd08704">
    <property type="entry name" value="Met_tRNA_FMT_C"/>
    <property type="match status" value="1"/>
</dbReference>
<dbReference type="Gene3D" id="3.40.50.12230">
    <property type="match status" value="1"/>
</dbReference>
<dbReference type="HAMAP" id="MF_00182">
    <property type="entry name" value="Formyl_trans"/>
    <property type="match status" value="1"/>
</dbReference>
<dbReference type="InterPro" id="IPR005794">
    <property type="entry name" value="Fmt"/>
</dbReference>
<dbReference type="InterPro" id="IPR005793">
    <property type="entry name" value="Formyl_trans_C"/>
</dbReference>
<dbReference type="InterPro" id="IPR002376">
    <property type="entry name" value="Formyl_transf_N"/>
</dbReference>
<dbReference type="InterPro" id="IPR036477">
    <property type="entry name" value="Formyl_transf_N_sf"/>
</dbReference>
<dbReference type="InterPro" id="IPR011034">
    <property type="entry name" value="Formyl_transferase-like_C_sf"/>
</dbReference>
<dbReference type="InterPro" id="IPR001555">
    <property type="entry name" value="GART_AS"/>
</dbReference>
<dbReference type="InterPro" id="IPR044135">
    <property type="entry name" value="Met-tRNA-FMT_C"/>
</dbReference>
<dbReference type="InterPro" id="IPR041711">
    <property type="entry name" value="Met-tRNA-FMT_N"/>
</dbReference>
<dbReference type="NCBIfam" id="TIGR00460">
    <property type="entry name" value="fmt"/>
    <property type="match status" value="1"/>
</dbReference>
<dbReference type="PANTHER" id="PTHR11138">
    <property type="entry name" value="METHIONYL-TRNA FORMYLTRANSFERASE"/>
    <property type="match status" value="1"/>
</dbReference>
<dbReference type="PANTHER" id="PTHR11138:SF5">
    <property type="entry name" value="METHIONYL-TRNA FORMYLTRANSFERASE, MITOCHONDRIAL"/>
    <property type="match status" value="1"/>
</dbReference>
<dbReference type="Pfam" id="PF02911">
    <property type="entry name" value="Formyl_trans_C"/>
    <property type="match status" value="1"/>
</dbReference>
<dbReference type="Pfam" id="PF00551">
    <property type="entry name" value="Formyl_trans_N"/>
    <property type="match status" value="1"/>
</dbReference>
<dbReference type="SUPFAM" id="SSF50486">
    <property type="entry name" value="FMT C-terminal domain-like"/>
    <property type="match status" value="1"/>
</dbReference>
<dbReference type="SUPFAM" id="SSF53328">
    <property type="entry name" value="Formyltransferase"/>
    <property type="match status" value="1"/>
</dbReference>
<dbReference type="PROSITE" id="PS00373">
    <property type="entry name" value="GART"/>
    <property type="match status" value="1"/>
</dbReference>
<organism>
    <name type="scientific">Campylobacter jejuni subsp. jejuni serotype O:2 (strain ATCC 700819 / NCTC 11168)</name>
    <dbReference type="NCBI Taxonomy" id="192222"/>
    <lineage>
        <taxon>Bacteria</taxon>
        <taxon>Pseudomonadati</taxon>
        <taxon>Campylobacterota</taxon>
        <taxon>Epsilonproteobacteria</taxon>
        <taxon>Campylobacterales</taxon>
        <taxon>Campylobacteraceae</taxon>
        <taxon>Campylobacter</taxon>
    </lineage>
</organism>
<feature type="chain" id="PRO_0000082938" description="Methionyl-tRNA formyltransferase">
    <location>
        <begin position="1"/>
        <end position="305"/>
    </location>
</feature>
<feature type="binding site" evidence="1">
    <location>
        <begin position="111"/>
        <end position="114"/>
    </location>
    <ligand>
        <name>(6S)-5,6,7,8-tetrahydrofolate</name>
        <dbReference type="ChEBI" id="CHEBI:57453"/>
    </ligand>
</feature>